<dbReference type="EC" id="2.7.10.2" evidence="3"/>
<dbReference type="EMBL" id="U05247">
    <property type="protein sequence ID" value="AAA18766.1"/>
    <property type="molecule type" value="mRNA"/>
</dbReference>
<dbReference type="EMBL" id="AY902339">
    <property type="protein sequence ID" value="AAX90624.1"/>
    <property type="molecule type" value="Genomic_DNA"/>
</dbReference>
<dbReference type="EMBL" id="AK156058">
    <property type="protein sequence ID" value="BAE33565.1"/>
    <property type="molecule type" value="mRNA"/>
</dbReference>
<dbReference type="EMBL" id="AK170815">
    <property type="protein sequence ID" value="BAE42047.1"/>
    <property type="molecule type" value="mRNA"/>
</dbReference>
<dbReference type="EMBL" id="BC018394">
    <property type="protein sequence ID" value="AAH18394.1"/>
    <property type="molecule type" value="mRNA"/>
</dbReference>
<dbReference type="EMBL" id="BC052006">
    <property type="protein sequence ID" value="AAH52006.2"/>
    <property type="molecule type" value="mRNA"/>
</dbReference>
<dbReference type="EMBL" id="X57242">
    <property type="protein sequence ID" value="CAA40518.1"/>
    <property type="molecule type" value="mRNA"/>
</dbReference>
<dbReference type="CCDS" id="CCDS23228.1"/>
<dbReference type="PIR" id="I48929">
    <property type="entry name" value="I48929"/>
</dbReference>
<dbReference type="RefSeq" id="NP_001291690.1">
    <property type="nucleotide sequence ID" value="NM_001304761.2"/>
</dbReference>
<dbReference type="RefSeq" id="NP_001398570.1">
    <property type="nucleotide sequence ID" value="NM_001411641.1"/>
</dbReference>
<dbReference type="RefSeq" id="NP_001398571.1">
    <property type="nucleotide sequence ID" value="NM_001411642.1"/>
</dbReference>
<dbReference type="RefSeq" id="NP_001398572.1">
    <property type="nucleotide sequence ID" value="NM_001411643.1"/>
</dbReference>
<dbReference type="RefSeq" id="NP_001398573.1">
    <property type="nucleotide sequence ID" value="NM_001411644.1"/>
</dbReference>
<dbReference type="RefSeq" id="NP_031809.2">
    <property type="nucleotide sequence ID" value="NM_007783.3"/>
</dbReference>
<dbReference type="RefSeq" id="XP_006510864.1">
    <property type="nucleotide sequence ID" value="XM_006510801.3"/>
</dbReference>
<dbReference type="RefSeq" id="XP_006510865.1">
    <property type="nucleotide sequence ID" value="XM_006510802.3"/>
</dbReference>
<dbReference type="RefSeq" id="XP_036010486.1">
    <property type="nucleotide sequence ID" value="XM_036154593.1"/>
</dbReference>
<dbReference type="PDB" id="1JEG">
    <property type="method" value="NMR"/>
    <property type="chains" value="A=1-83"/>
</dbReference>
<dbReference type="PDBsum" id="1JEG"/>
<dbReference type="BMRB" id="P41241"/>
<dbReference type="SMR" id="P41241"/>
<dbReference type="BioGRID" id="198936">
    <property type="interactions" value="37"/>
</dbReference>
<dbReference type="CORUM" id="P41241"/>
<dbReference type="FunCoup" id="P41241">
    <property type="interactions" value="1404"/>
</dbReference>
<dbReference type="IntAct" id="P41241">
    <property type="interactions" value="35"/>
</dbReference>
<dbReference type="MINT" id="P41241"/>
<dbReference type="STRING" id="10090.ENSMUSP00000034863"/>
<dbReference type="iPTMnet" id="P41241"/>
<dbReference type="PhosphoSitePlus" id="P41241"/>
<dbReference type="SwissPalm" id="P41241"/>
<dbReference type="jPOST" id="P41241"/>
<dbReference type="PaxDb" id="10090-ENSMUSP00000034863"/>
<dbReference type="PeptideAtlas" id="P41241"/>
<dbReference type="ProteomicsDB" id="285348"/>
<dbReference type="Pumba" id="P41241"/>
<dbReference type="Antibodypedia" id="4405">
    <property type="antibodies" value="795 antibodies from 40 providers"/>
</dbReference>
<dbReference type="DNASU" id="12988"/>
<dbReference type="Ensembl" id="ENSMUST00000034863.8">
    <property type="protein sequence ID" value="ENSMUSP00000034863.7"/>
    <property type="gene ID" value="ENSMUSG00000032312.8"/>
</dbReference>
<dbReference type="Ensembl" id="ENSMUST00000215396.2">
    <property type="protein sequence ID" value="ENSMUSP00000150590.2"/>
    <property type="gene ID" value="ENSMUSG00000032312.8"/>
</dbReference>
<dbReference type="Ensembl" id="ENSMUST00000217314.2">
    <property type="protein sequence ID" value="ENSMUSP00000150984.2"/>
    <property type="gene ID" value="ENSMUSG00000032312.8"/>
</dbReference>
<dbReference type="GeneID" id="12988"/>
<dbReference type="KEGG" id="mmu:12988"/>
<dbReference type="UCSC" id="uc009pvk.2">
    <property type="organism name" value="mouse"/>
</dbReference>
<dbReference type="AGR" id="MGI:88537"/>
<dbReference type="CTD" id="1445"/>
<dbReference type="MGI" id="MGI:88537">
    <property type="gene designation" value="Csk"/>
</dbReference>
<dbReference type="VEuPathDB" id="HostDB:ENSMUSG00000032312"/>
<dbReference type="eggNOG" id="KOG0197">
    <property type="taxonomic scope" value="Eukaryota"/>
</dbReference>
<dbReference type="GeneTree" id="ENSGT00940000157431"/>
<dbReference type="HOGENOM" id="CLU_000288_7_2_1"/>
<dbReference type="InParanoid" id="P41241"/>
<dbReference type="OMA" id="PTMTTHS"/>
<dbReference type="OrthoDB" id="346907at2759"/>
<dbReference type="PhylomeDB" id="P41241"/>
<dbReference type="TreeFam" id="TF351634"/>
<dbReference type="BRENDA" id="2.7.10.2">
    <property type="organism ID" value="3474"/>
</dbReference>
<dbReference type="Reactome" id="R-MMU-180292">
    <property type="pathway name" value="GAB1 signalosome"/>
</dbReference>
<dbReference type="Reactome" id="R-MMU-202427">
    <property type="pathway name" value="Phosphorylation of CD3 and TCR zeta chains"/>
</dbReference>
<dbReference type="Reactome" id="R-MMU-354192">
    <property type="pathway name" value="Integrin signaling"/>
</dbReference>
<dbReference type="Reactome" id="R-MMU-389948">
    <property type="pathway name" value="Co-inhibition by PD-1"/>
</dbReference>
<dbReference type="Reactome" id="R-MMU-5674135">
    <property type="pathway name" value="MAP2K and MAPK activation"/>
</dbReference>
<dbReference type="Reactome" id="R-MMU-9013407">
    <property type="pathway name" value="RHOH GTPase cycle"/>
</dbReference>
<dbReference type="Reactome" id="R-MMU-9706369">
    <property type="pathway name" value="Negative regulation of FLT3"/>
</dbReference>
<dbReference type="BioGRID-ORCS" id="12988">
    <property type="hits" value="10 hits in 65 CRISPR screens"/>
</dbReference>
<dbReference type="ChiTaRS" id="Csk">
    <property type="organism name" value="mouse"/>
</dbReference>
<dbReference type="EvolutionaryTrace" id="P41241"/>
<dbReference type="PRO" id="PR:P41241"/>
<dbReference type="Proteomes" id="UP000000589">
    <property type="component" value="Chromosome 9"/>
</dbReference>
<dbReference type="RNAct" id="P41241">
    <property type="molecule type" value="protein"/>
</dbReference>
<dbReference type="Bgee" id="ENSMUSG00000032312">
    <property type="expression patterns" value="Expressed in granulocyte and 239 other cell types or tissues"/>
</dbReference>
<dbReference type="ExpressionAtlas" id="P41241">
    <property type="expression patterns" value="baseline and differential"/>
</dbReference>
<dbReference type="GO" id="GO:0005911">
    <property type="term" value="C:cell-cell junction"/>
    <property type="evidence" value="ECO:0000314"/>
    <property type="project" value="MGI"/>
</dbReference>
<dbReference type="GO" id="GO:0005737">
    <property type="term" value="C:cytoplasm"/>
    <property type="evidence" value="ECO:0000250"/>
    <property type="project" value="UniProtKB"/>
</dbReference>
<dbReference type="GO" id="GO:0005886">
    <property type="term" value="C:plasma membrane"/>
    <property type="evidence" value="ECO:0000304"/>
    <property type="project" value="HGNC-UCL"/>
</dbReference>
<dbReference type="GO" id="GO:0005524">
    <property type="term" value="F:ATP binding"/>
    <property type="evidence" value="ECO:0000304"/>
    <property type="project" value="HGNC-UCL"/>
</dbReference>
<dbReference type="GO" id="GO:0042802">
    <property type="term" value="F:identical protein binding"/>
    <property type="evidence" value="ECO:0007669"/>
    <property type="project" value="Ensembl"/>
</dbReference>
<dbReference type="GO" id="GO:0046872">
    <property type="term" value="F:metal ion binding"/>
    <property type="evidence" value="ECO:0007669"/>
    <property type="project" value="UniProtKB-KW"/>
</dbReference>
<dbReference type="GO" id="GO:0004715">
    <property type="term" value="F:non-membrane spanning protein tyrosine kinase activity"/>
    <property type="evidence" value="ECO:0007669"/>
    <property type="project" value="UniProtKB-EC"/>
</dbReference>
<dbReference type="GO" id="GO:0070064">
    <property type="term" value="F:proline-rich region binding"/>
    <property type="evidence" value="ECO:0007669"/>
    <property type="project" value="Ensembl"/>
</dbReference>
<dbReference type="GO" id="GO:0034236">
    <property type="term" value="F:protein kinase A catalytic subunit binding"/>
    <property type="evidence" value="ECO:0007669"/>
    <property type="project" value="Ensembl"/>
</dbReference>
<dbReference type="GO" id="GO:0019903">
    <property type="term" value="F:protein phosphatase binding"/>
    <property type="evidence" value="ECO:0007669"/>
    <property type="project" value="Ensembl"/>
</dbReference>
<dbReference type="GO" id="GO:0004713">
    <property type="term" value="F:protein tyrosine kinase activity"/>
    <property type="evidence" value="ECO:0000250"/>
    <property type="project" value="UniProtKB"/>
</dbReference>
<dbReference type="GO" id="GO:1990782">
    <property type="term" value="F:protein tyrosine kinase binding"/>
    <property type="evidence" value="ECO:0007669"/>
    <property type="project" value="Ensembl"/>
</dbReference>
<dbReference type="GO" id="GO:0016740">
    <property type="term" value="F:transferase activity"/>
    <property type="evidence" value="ECO:0000304"/>
    <property type="project" value="HGNC-UCL"/>
</dbReference>
<dbReference type="GO" id="GO:0002250">
    <property type="term" value="P:adaptive immune response"/>
    <property type="evidence" value="ECO:0007669"/>
    <property type="project" value="UniProtKB-KW"/>
</dbReference>
<dbReference type="GO" id="GO:0034332">
    <property type="term" value="P:adherens junction organization"/>
    <property type="evidence" value="ECO:0007669"/>
    <property type="project" value="Ensembl"/>
</dbReference>
<dbReference type="GO" id="GO:0071375">
    <property type="term" value="P:cellular response to peptide hormone stimulus"/>
    <property type="evidence" value="ECO:0007669"/>
    <property type="project" value="Ensembl"/>
</dbReference>
<dbReference type="GO" id="GO:0035556">
    <property type="term" value="P:intracellular signal transduction"/>
    <property type="evidence" value="ECO:0000315"/>
    <property type="project" value="HGNC-UCL"/>
</dbReference>
<dbReference type="GO" id="GO:0045779">
    <property type="term" value="P:negative regulation of bone resorption"/>
    <property type="evidence" value="ECO:0007669"/>
    <property type="project" value="Ensembl"/>
</dbReference>
<dbReference type="GO" id="GO:0008285">
    <property type="term" value="P:negative regulation of cell population proliferation"/>
    <property type="evidence" value="ECO:0000315"/>
    <property type="project" value="MGI"/>
</dbReference>
<dbReference type="GO" id="GO:0070373">
    <property type="term" value="P:negative regulation of ERK1 and ERK2 cascade"/>
    <property type="evidence" value="ECO:0007669"/>
    <property type="project" value="Ensembl"/>
</dbReference>
<dbReference type="GO" id="GO:0042997">
    <property type="term" value="P:negative regulation of Golgi to plasma membrane protein transport"/>
    <property type="evidence" value="ECO:0007669"/>
    <property type="project" value="Ensembl"/>
</dbReference>
<dbReference type="GO" id="GO:0032715">
    <property type="term" value="P:negative regulation of interleukin-6 production"/>
    <property type="evidence" value="ECO:0007669"/>
    <property type="project" value="Ensembl"/>
</dbReference>
<dbReference type="GO" id="GO:0010989">
    <property type="term" value="P:negative regulation of low-density lipoprotein particle clearance"/>
    <property type="evidence" value="ECO:0007669"/>
    <property type="project" value="Ensembl"/>
</dbReference>
<dbReference type="GO" id="GO:0050765">
    <property type="term" value="P:negative regulation of phagocytosis"/>
    <property type="evidence" value="ECO:0007669"/>
    <property type="project" value="Ensembl"/>
</dbReference>
<dbReference type="GO" id="GO:0050868">
    <property type="term" value="P:negative regulation of T cell activation"/>
    <property type="evidence" value="ECO:0000315"/>
    <property type="project" value="HGNC-UCL"/>
</dbReference>
<dbReference type="GO" id="GO:0050860">
    <property type="term" value="P:negative regulation of T cell receptor signaling pathway"/>
    <property type="evidence" value="ECO:0000315"/>
    <property type="project" value="HGNC-UCL"/>
</dbReference>
<dbReference type="GO" id="GO:0048709">
    <property type="term" value="P:oligodendrocyte differentiation"/>
    <property type="evidence" value="ECO:0007669"/>
    <property type="project" value="Ensembl"/>
</dbReference>
<dbReference type="GO" id="GO:0060368">
    <property type="term" value="P:regulation of Fc receptor mediated stimulatory signaling pathway"/>
    <property type="evidence" value="ECO:0007669"/>
    <property type="project" value="Ensembl"/>
</dbReference>
<dbReference type="CDD" id="cd05082">
    <property type="entry name" value="PTKc_Csk"/>
    <property type="match status" value="1"/>
</dbReference>
<dbReference type="CDD" id="cd09937">
    <property type="entry name" value="SH2_csk_like"/>
    <property type="match status" value="1"/>
</dbReference>
<dbReference type="CDD" id="cd11769">
    <property type="entry name" value="SH3_CSK"/>
    <property type="match status" value="1"/>
</dbReference>
<dbReference type="FunFam" id="1.10.510.10:FF:000272">
    <property type="entry name" value="Tyrosine-protein kinase"/>
    <property type="match status" value="1"/>
</dbReference>
<dbReference type="FunFam" id="2.30.30.40:FF:000146">
    <property type="entry name" value="Tyrosine-protein kinase"/>
    <property type="match status" value="1"/>
</dbReference>
<dbReference type="FunFam" id="3.30.200.20:FF:000053">
    <property type="entry name" value="Tyrosine-protein kinase"/>
    <property type="match status" value="1"/>
</dbReference>
<dbReference type="FunFam" id="3.30.505.10:FF:000023">
    <property type="entry name" value="Tyrosine-protein kinase"/>
    <property type="match status" value="1"/>
</dbReference>
<dbReference type="Gene3D" id="3.30.200.20">
    <property type="entry name" value="Phosphorylase Kinase, domain 1"/>
    <property type="match status" value="1"/>
</dbReference>
<dbReference type="Gene3D" id="3.30.505.10">
    <property type="entry name" value="SH2 domain"/>
    <property type="match status" value="1"/>
</dbReference>
<dbReference type="Gene3D" id="2.30.30.40">
    <property type="entry name" value="SH3 Domains"/>
    <property type="match status" value="1"/>
</dbReference>
<dbReference type="Gene3D" id="1.10.510.10">
    <property type="entry name" value="Transferase(Phosphotransferase) domain 1"/>
    <property type="match status" value="1"/>
</dbReference>
<dbReference type="InterPro" id="IPR035027">
    <property type="entry name" value="Csk-like_SH2"/>
</dbReference>
<dbReference type="InterPro" id="IPR011009">
    <property type="entry name" value="Kinase-like_dom_sf"/>
</dbReference>
<dbReference type="InterPro" id="IPR050198">
    <property type="entry name" value="Non-receptor_tyrosine_kinases"/>
</dbReference>
<dbReference type="InterPro" id="IPR000719">
    <property type="entry name" value="Prot_kinase_dom"/>
</dbReference>
<dbReference type="InterPro" id="IPR017441">
    <property type="entry name" value="Protein_kinase_ATP_BS"/>
</dbReference>
<dbReference type="InterPro" id="IPR001245">
    <property type="entry name" value="Ser-Thr/Tyr_kinase_cat_dom"/>
</dbReference>
<dbReference type="InterPro" id="IPR000980">
    <property type="entry name" value="SH2"/>
</dbReference>
<dbReference type="InterPro" id="IPR036860">
    <property type="entry name" value="SH2_dom_sf"/>
</dbReference>
<dbReference type="InterPro" id="IPR036028">
    <property type="entry name" value="SH3-like_dom_sf"/>
</dbReference>
<dbReference type="InterPro" id="IPR001452">
    <property type="entry name" value="SH3_domain"/>
</dbReference>
<dbReference type="InterPro" id="IPR008266">
    <property type="entry name" value="Tyr_kinase_AS"/>
</dbReference>
<dbReference type="InterPro" id="IPR020635">
    <property type="entry name" value="Tyr_kinase_cat_dom"/>
</dbReference>
<dbReference type="PANTHER" id="PTHR24418">
    <property type="entry name" value="TYROSINE-PROTEIN KINASE"/>
    <property type="match status" value="1"/>
</dbReference>
<dbReference type="Pfam" id="PF07714">
    <property type="entry name" value="PK_Tyr_Ser-Thr"/>
    <property type="match status" value="1"/>
</dbReference>
<dbReference type="Pfam" id="PF00017">
    <property type="entry name" value="SH2"/>
    <property type="match status" value="1"/>
</dbReference>
<dbReference type="Pfam" id="PF00018">
    <property type="entry name" value="SH3_1"/>
    <property type="match status" value="1"/>
</dbReference>
<dbReference type="PRINTS" id="PR00401">
    <property type="entry name" value="SH2DOMAIN"/>
</dbReference>
<dbReference type="PRINTS" id="PR00109">
    <property type="entry name" value="TYRKINASE"/>
</dbReference>
<dbReference type="SMART" id="SM00252">
    <property type="entry name" value="SH2"/>
    <property type="match status" value="1"/>
</dbReference>
<dbReference type="SMART" id="SM00326">
    <property type="entry name" value="SH3"/>
    <property type="match status" value="1"/>
</dbReference>
<dbReference type="SMART" id="SM00219">
    <property type="entry name" value="TyrKc"/>
    <property type="match status" value="1"/>
</dbReference>
<dbReference type="SUPFAM" id="SSF56112">
    <property type="entry name" value="Protein kinase-like (PK-like)"/>
    <property type="match status" value="1"/>
</dbReference>
<dbReference type="SUPFAM" id="SSF55550">
    <property type="entry name" value="SH2 domain"/>
    <property type="match status" value="1"/>
</dbReference>
<dbReference type="SUPFAM" id="SSF50044">
    <property type="entry name" value="SH3-domain"/>
    <property type="match status" value="1"/>
</dbReference>
<dbReference type="PROSITE" id="PS00107">
    <property type="entry name" value="PROTEIN_KINASE_ATP"/>
    <property type="match status" value="1"/>
</dbReference>
<dbReference type="PROSITE" id="PS50011">
    <property type="entry name" value="PROTEIN_KINASE_DOM"/>
    <property type="match status" value="1"/>
</dbReference>
<dbReference type="PROSITE" id="PS00109">
    <property type="entry name" value="PROTEIN_KINASE_TYR"/>
    <property type="match status" value="1"/>
</dbReference>
<dbReference type="PROSITE" id="PS50001">
    <property type="entry name" value="SH2"/>
    <property type="match status" value="1"/>
</dbReference>
<dbReference type="PROSITE" id="PS50002">
    <property type="entry name" value="SH3"/>
    <property type="match status" value="1"/>
</dbReference>
<proteinExistence type="evidence at protein level"/>
<evidence type="ECO:0000250" key="1"/>
<evidence type="ECO:0000250" key="2">
    <source>
        <dbReference type="UniProtKB" id="P32577"/>
    </source>
</evidence>
<evidence type="ECO:0000250" key="3">
    <source>
        <dbReference type="UniProtKB" id="P41240"/>
    </source>
</evidence>
<evidence type="ECO:0000255" key="4">
    <source>
        <dbReference type="PROSITE-ProRule" id="PRU00159"/>
    </source>
</evidence>
<evidence type="ECO:0000255" key="5">
    <source>
        <dbReference type="PROSITE-ProRule" id="PRU00191"/>
    </source>
</evidence>
<evidence type="ECO:0000255" key="6">
    <source>
        <dbReference type="PROSITE-ProRule" id="PRU00192"/>
    </source>
</evidence>
<evidence type="ECO:0000255" key="7">
    <source>
        <dbReference type="PROSITE-ProRule" id="PRU10028"/>
    </source>
</evidence>
<evidence type="ECO:0000269" key="8">
    <source>
    </source>
</evidence>
<evidence type="ECO:0000269" key="9">
    <source>
    </source>
</evidence>
<evidence type="ECO:0000269" key="10">
    <source>
    </source>
</evidence>
<evidence type="ECO:0000269" key="11">
    <source>
    </source>
</evidence>
<evidence type="ECO:0000269" key="12">
    <source>
    </source>
</evidence>
<evidence type="ECO:0000269" key="13">
    <source>
    </source>
</evidence>
<evidence type="ECO:0000269" key="14">
    <source>
    </source>
</evidence>
<evidence type="ECO:0000269" key="15">
    <source>
    </source>
</evidence>
<evidence type="ECO:0000305" key="16"/>
<evidence type="ECO:0007829" key="17">
    <source>
        <dbReference type="PDB" id="1JEG"/>
    </source>
</evidence>
<comment type="function">
    <text evidence="1">Non-receptor tyrosine-protein kinase that plays an important role in the regulation of cell growth, differentiation, migration and immune response. Phosphorylates tyrosine residues located in the C-terminal tails of Src-family kinases (SFKs) including LCK, SRC, HCK, FYN, LYN, CSK or YES1. Upon tail phosphorylation, Src-family members engage in intramolecular interactions between the phosphotyrosine tail and the SH2 domain that result in an inactive conformation. To inhibit SFKs, CSK is recruited to the plasma membrane via binding to transmembrane proteins or adapter proteins located near the plasma membrane. Suppresses signaling by various surface receptors, including T-cell receptor (TCR) and B-cell receptor (BCR) by phosphorylating and maintaining inactive several positive effectors such as FYN or LCK (By similarity).</text>
</comment>
<comment type="catalytic activity">
    <reaction evidence="3 7">
        <text>L-tyrosyl-[protein] + ATP = O-phospho-L-tyrosyl-[protein] + ADP + H(+)</text>
        <dbReference type="Rhea" id="RHEA:10596"/>
        <dbReference type="Rhea" id="RHEA-COMP:10136"/>
        <dbReference type="Rhea" id="RHEA-COMP:20101"/>
        <dbReference type="ChEBI" id="CHEBI:15378"/>
        <dbReference type="ChEBI" id="CHEBI:30616"/>
        <dbReference type="ChEBI" id="CHEBI:46858"/>
        <dbReference type="ChEBI" id="CHEBI:61978"/>
        <dbReference type="ChEBI" id="CHEBI:456216"/>
        <dbReference type="EC" id="2.7.10.2"/>
    </reaction>
</comment>
<comment type="cofactor">
    <cofactor evidence="3">
        <name>Mg(2+)</name>
        <dbReference type="ChEBI" id="CHEBI:18420"/>
    </cofactor>
    <cofactor evidence="3">
        <name>Mn(2+)</name>
        <dbReference type="ChEBI" id="CHEBI:29035"/>
    </cofactor>
</comment>
<comment type="subunit">
    <text evidence="2 3 8 9 10 11 12 14 15">Homodimer (via SH3-domain) (By similarity). Interacts with PTPN22 (PubMed:8890164). Interacts with phosphorylated SIT1, PAG1, LIME1 and TGFB1I1; these interactions serve to recruit CSK to the membrane where it can phosphorylate and inhibit Src-family kinases (PubMed:12218089, PubMed:12612075, PubMed:16166631, PubMed:9858471). Interacts with SRCIN1 (By similarity). Interacts with RHOH (By similarity). Interacts (via SH2 domain) with SCIMP; this interaction is dependent on phosphorylation of SCIMP 'Tyr-96' (PubMed:28290451). Interacts (via SH2 domain) with PRAG1 (when phosphorylated at 'Tyr-391'); this interaction prevents translocation of CSK from the cytoplasm to the membrane leading to increased activity of CSK (By similarity). Interacts with LRRK1 (PubMed:23526378).</text>
</comment>
<comment type="interaction">
    <interactant intactId="EBI-2553183">
        <id>P41241</id>
    </interactant>
    <interactant intactId="EBI-8468834">
        <id>Q3U1F9</id>
        <label>Pag1</label>
    </interactant>
    <organismsDiffer>false</organismsDiffer>
    <experiments>9</experiments>
</comment>
<comment type="interaction">
    <interactant intactId="EBI-2553183">
        <id>P41241</id>
    </interactant>
    <interactant intactId="EBI-641748">
        <id>P42337</id>
        <label>Pik3ca</label>
    </interactant>
    <organismsDiffer>false</organismsDiffer>
    <experiments>2</experiments>
</comment>
<comment type="subcellular location">
    <subcellularLocation>
        <location evidence="10">Cytoplasm</location>
    </subcellularLocation>
    <subcellularLocation>
        <location evidence="10">Cell membrane</location>
    </subcellularLocation>
    <text>Mainly cytoplasmic, also present in lipid rafts.</text>
</comment>
<comment type="tissue specificity">
    <text>Ubiquitous, but most abundant in thymus and spleen, as well as in neonatal brain.</text>
</comment>
<comment type="domain">
    <text evidence="1">The architecture of this protein is similar to that of Src-family kinases (SFKs) with one N-terminal SH3 domain, one SH2 domain, and a C-terminal kinase domain.</text>
</comment>
<comment type="PTM">
    <text evidence="1">Phosphorylated at Ser-364 by PKA, leading to increased activity. Autophosphorylated (By similarity).</text>
</comment>
<comment type="disruption phenotype">
    <text evidence="13">Mice die between day 9 and day 10 of gestation with several defects including a non-functional neural tube. SRC and FYN kinases show increased activity when CSK is missing.</text>
</comment>
<comment type="similarity">
    <text evidence="4">Belongs to the protein kinase superfamily. Tyr protein kinase family. CSK subfamily.</text>
</comment>
<sequence>MSAIQAAWPSGTECIAKYNFHGTAEQDLPFCKGDVLTIVAVTKDPNWYKAKNKVGREGIIPANYVQKREGVKAGTKLSLMPWFHGKITREQAERLLYPPETGLFLVRESTNYPGDYTLCVSCEGKVEHYRIMYHASKLSIDEEVYFENLMQLVEHYTTDADGLCTRLIKPKVMEGTVAAQDEFYRSGWALNMKELKLLQTIGKGEFGDVMLGDYRGNKVAVKCIKNDATAQAFLAEASVMTQLRHSNLVQLLGVIVEEKGGLYIVTEYMAKGSLVDYLRSRGRSVLGGDCLLKFSLDVCEAMEYLEGNNFVHRDLAARNVLVSEDNVAKVSDFGLTKEASSTQDTGKLPVKWTAPEALREKKFSTKSDVWSFGILLWEIYSFGRVPYPRIPLKDVVPRVEKGYKMDAPDGCPPAVYEVMKNCWHLDAATRPTFLQLREQLEHIKTHELHL</sequence>
<accession>P41241</accession>
<accession>Q03143</accession>
<accession>Q80WU4</accession>
<accession>Q8VCW1</accession>
<organism>
    <name type="scientific">Mus musculus</name>
    <name type="common">Mouse</name>
    <dbReference type="NCBI Taxonomy" id="10090"/>
    <lineage>
        <taxon>Eukaryota</taxon>
        <taxon>Metazoa</taxon>
        <taxon>Chordata</taxon>
        <taxon>Craniata</taxon>
        <taxon>Vertebrata</taxon>
        <taxon>Euteleostomi</taxon>
        <taxon>Mammalia</taxon>
        <taxon>Eutheria</taxon>
        <taxon>Euarchontoglires</taxon>
        <taxon>Glires</taxon>
        <taxon>Rodentia</taxon>
        <taxon>Myomorpha</taxon>
        <taxon>Muroidea</taxon>
        <taxon>Muridae</taxon>
        <taxon>Murinae</taxon>
        <taxon>Mus</taxon>
        <taxon>Mus</taxon>
    </lineage>
</organism>
<name>CSK_MOUSE</name>
<feature type="initiator methionine" description="Removed" evidence="3">
    <location>
        <position position="1"/>
    </location>
</feature>
<feature type="chain" id="PRO_0000088071" description="Tyrosine-protein kinase CSK">
    <location>
        <begin position="2"/>
        <end position="450"/>
    </location>
</feature>
<feature type="domain" description="SH3" evidence="6">
    <location>
        <begin position="9"/>
        <end position="70"/>
    </location>
</feature>
<feature type="domain" description="SH2" evidence="5">
    <location>
        <begin position="82"/>
        <end position="171"/>
    </location>
</feature>
<feature type="domain" description="Protein kinase" evidence="4">
    <location>
        <begin position="195"/>
        <end position="449"/>
    </location>
</feature>
<feature type="region of interest" description="Interaction with PTPN22" evidence="14">
    <location>
        <begin position="9"/>
        <end position="70"/>
    </location>
</feature>
<feature type="active site" description="Proton acceptor" evidence="4 7">
    <location>
        <position position="314"/>
    </location>
</feature>
<feature type="binding site" evidence="4">
    <location>
        <begin position="201"/>
        <end position="209"/>
    </location>
    <ligand>
        <name>ATP</name>
        <dbReference type="ChEBI" id="CHEBI:30616"/>
    </ligand>
</feature>
<feature type="binding site" evidence="4">
    <location>
        <position position="222"/>
    </location>
    <ligand>
        <name>ATP</name>
        <dbReference type="ChEBI" id="CHEBI:30616"/>
    </ligand>
</feature>
<feature type="modified residue" description="N-acetylserine" evidence="3">
    <location>
        <position position="2"/>
    </location>
</feature>
<feature type="modified residue" description="Phosphotyrosine" evidence="3">
    <location>
        <position position="184"/>
    </location>
</feature>
<feature type="modified residue" description="Phosphotyrosine" evidence="3">
    <location>
        <position position="304"/>
    </location>
</feature>
<feature type="modified residue" description="Phosphoserine; by PKA" evidence="3">
    <location>
        <position position="364"/>
    </location>
</feature>
<feature type="modified residue" description="Phosphotyrosine; by autocatalysis" evidence="3">
    <location>
        <position position="416"/>
    </location>
</feature>
<feature type="sequence conflict" description="In Ref. 1; AAA18766." evidence="16" ref="1">
    <original>C</original>
    <variation>L</variation>
    <location>
        <position position="299"/>
    </location>
</feature>
<feature type="sequence conflict" description="In Ref. 1; AAA18766." evidence="16" ref="1">
    <original>E</original>
    <variation>D</variation>
    <location>
        <position position="417"/>
    </location>
</feature>
<feature type="sequence conflict" description="In Ref. 1; AAA18766." evidence="16" ref="1">
    <original>W</original>
    <variation>S</variation>
    <location>
        <position position="423"/>
    </location>
</feature>
<feature type="strand" evidence="17">
    <location>
        <begin position="13"/>
        <end position="18"/>
    </location>
</feature>
<feature type="strand" evidence="17">
    <location>
        <begin position="35"/>
        <end position="41"/>
    </location>
</feature>
<feature type="strand" evidence="17">
    <location>
        <begin position="43"/>
        <end position="51"/>
    </location>
</feature>
<feature type="strand" evidence="17">
    <location>
        <begin position="57"/>
        <end position="61"/>
    </location>
</feature>
<feature type="helix" evidence="17">
    <location>
        <begin position="62"/>
        <end position="64"/>
    </location>
</feature>
<feature type="strand" evidence="17">
    <location>
        <begin position="65"/>
        <end position="67"/>
    </location>
</feature>
<reference key="1">
    <citation type="journal article" date="1994" name="Proc. Natl. Acad. Sci. U.S.A.">
        <title>Ctk: a protein-tyrosine kinase related to Csk that defines an enzyme family.</title>
        <authorList>
            <person name="Klages S."/>
            <person name="Adam D."/>
            <person name="Class K."/>
            <person name="Fargnoli J."/>
            <person name="Bolen J.B."/>
            <person name="Penhallow R.C."/>
        </authorList>
    </citation>
    <scope>NUCLEOTIDE SEQUENCE [MRNA]</scope>
    <source>
        <tissue>Brain</tissue>
    </source>
</reference>
<reference key="2">
    <citation type="submission" date="2005-01" db="EMBL/GenBank/DDBJ databases">
        <title>Characterization of quantitative trait loci influencing growth and adiposity using congenic mouse strains.</title>
        <authorList>
            <person name="Farber C.R."/>
            <person name="Corva P.M."/>
            <person name="Medrano J.F."/>
        </authorList>
    </citation>
    <scope>NUCLEOTIDE SEQUENCE [GENOMIC DNA]</scope>
    <source>
        <strain>CAST/EiJ</strain>
        <tissue>Brain</tissue>
    </source>
</reference>
<reference key="3">
    <citation type="journal article" date="2005" name="Science">
        <title>The transcriptional landscape of the mammalian genome.</title>
        <authorList>
            <person name="Carninci P."/>
            <person name="Kasukawa T."/>
            <person name="Katayama S."/>
            <person name="Gough J."/>
            <person name="Frith M.C."/>
            <person name="Maeda N."/>
            <person name="Oyama R."/>
            <person name="Ravasi T."/>
            <person name="Lenhard B."/>
            <person name="Wells C."/>
            <person name="Kodzius R."/>
            <person name="Shimokawa K."/>
            <person name="Bajic V.B."/>
            <person name="Brenner S.E."/>
            <person name="Batalov S."/>
            <person name="Forrest A.R."/>
            <person name="Zavolan M."/>
            <person name="Davis M.J."/>
            <person name="Wilming L.G."/>
            <person name="Aidinis V."/>
            <person name="Allen J.E."/>
            <person name="Ambesi-Impiombato A."/>
            <person name="Apweiler R."/>
            <person name="Aturaliya R.N."/>
            <person name="Bailey T.L."/>
            <person name="Bansal M."/>
            <person name="Baxter L."/>
            <person name="Beisel K.W."/>
            <person name="Bersano T."/>
            <person name="Bono H."/>
            <person name="Chalk A.M."/>
            <person name="Chiu K.P."/>
            <person name="Choudhary V."/>
            <person name="Christoffels A."/>
            <person name="Clutterbuck D.R."/>
            <person name="Crowe M.L."/>
            <person name="Dalla E."/>
            <person name="Dalrymple B.P."/>
            <person name="de Bono B."/>
            <person name="Della Gatta G."/>
            <person name="di Bernardo D."/>
            <person name="Down T."/>
            <person name="Engstrom P."/>
            <person name="Fagiolini M."/>
            <person name="Faulkner G."/>
            <person name="Fletcher C.F."/>
            <person name="Fukushima T."/>
            <person name="Furuno M."/>
            <person name="Futaki S."/>
            <person name="Gariboldi M."/>
            <person name="Georgii-Hemming P."/>
            <person name="Gingeras T.R."/>
            <person name="Gojobori T."/>
            <person name="Green R.E."/>
            <person name="Gustincich S."/>
            <person name="Harbers M."/>
            <person name="Hayashi Y."/>
            <person name="Hensch T.K."/>
            <person name="Hirokawa N."/>
            <person name="Hill D."/>
            <person name="Huminiecki L."/>
            <person name="Iacono M."/>
            <person name="Ikeo K."/>
            <person name="Iwama A."/>
            <person name="Ishikawa T."/>
            <person name="Jakt M."/>
            <person name="Kanapin A."/>
            <person name="Katoh M."/>
            <person name="Kawasawa Y."/>
            <person name="Kelso J."/>
            <person name="Kitamura H."/>
            <person name="Kitano H."/>
            <person name="Kollias G."/>
            <person name="Krishnan S.P."/>
            <person name="Kruger A."/>
            <person name="Kummerfeld S.K."/>
            <person name="Kurochkin I.V."/>
            <person name="Lareau L.F."/>
            <person name="Lazarevic D."/>
            <person name="Lipovich L."/>
            <person name="Liu J."/>
            <person name="Liuni S."/>
            <person name="McWilliam S."/>
            <person name="Madan Babu M."/>
            <person name="Madera M."/>
            <person name="Marchionni L."/>
            <person name="Matsuda H."/>
            <person name="Matsuzawa S."/>
            <person name="Miki H."/>
            <person name="Mignone F."/>
            <person name="Miyake S."/>
            <person name="Morris K."/>
            <person name="Mottagui-Tabar S."/>
            <person name="Mulder N."/>
            <person name="Nakano N."/>
            <person name="Nakauchi H."/>
            <person name="Ng P."/>
            <person name="Nilsson R."/>
            <person name="Nishiguchi S."/>
            <person name="Nishikawa S."/>
            <person name="Nori F."/>
            <person name="Ohara O."/>
            <person name="Okazaki Y."/>
            <person name="Orlando V."/>
            <person name="Pang K.C."/>
            <person name="Pavan W.J."/>
            <person name="Pavesi G."/>
            <person name="Pesole G."/>
            <person name="Petrovsky N."/>
            <person name="Piazza S."/>
            <person name="Reed J."/>
            <person name="Reid J.F."/>
            <person name="Ring B.Z."/>
            <person name="Ringwald M."/>
            <person name="Rost B."/>
            <person name="Ruan Y."/>
            <person name="Salzberg S.L."/>
            <person name="Sandelin A."/>
            <person name="Schneider C."/>
            <person name="Schoenbach C."/>
            <person name="Sekiguchi K."/>
            <person name="Semple C.A."/>
            <person name="Seno S."/>
            <person name="Sessa L."/>
            <person name="Sheng Y."/>
            <person name="Shibata Y."/>
            <person name="Shimada H."/>
            <person name="Shimada K."/>
            <person name="Silva D."/>
            <person name="Sinclair B."/>
            <person name="Sperling S."/>
            <person name="Stupka E."/>
            <person name="Sugiura K."/>
            <person name="Sultana R."/>
            <person name="Takenaka Y."/>
            <person name="Taki K."/>
            <person name="Tammoja K."/>
            <person name="Tan S.L."/>
            <person name="Tang S."/>
            <person name="Taylor M.S."/>
            <person name="Tegner J."/>
            <person name="Teichmann S.A."/>
            <person name="Ueda H.R."/>
            <person name="van Nimwegen E."/>
            <person name="Verardo R."/>
            <person name="Wei C.L."/>
            <person name="Yagi K."/>
            <person name="Yamanishi H."/>
            <person name="Zabarovsky E."/>
            <person name="Zhu S."/>
            <person name="Zimmer A."/>
            <person name="Hide W."/>
            <person name="Bult C."/>
            <person name="Grimmond S.M."/>
            <person name="Teasdale R.D."/>
            <person name="Liu E.T."/>
            <person name="Brusic V."/>
            <person name="Quackenbush J."/>
            <person name="Wahlestedt C."/>
            <person name="Mattick J.S."/>
            <person name="Hume D.A."/>
            <person name="Kai C."/>
            <person name="Sasaki D."/>
            <person name="Tomaru Y."/>
            <person name="Fukuda S."/>
            <person name="Kanamori-Katayama M."/>
            <person name="Suzuki M."/>
            <person name="Aoki J."/>
            <person name="Arakawa T."/>
            <person name="Iida J."/>
            <person name="Imamura K."/>
            <person name="Itoh M."/>
            <person name="Kato T."/>
            <person name="Kawaji H."/>
            <person name="Kawagashira N."/>
            <person name="Kawashima T."/>
            <person name="Kojima M."/>
            <person name="Kondo S."/>
            <person name="Konno H."/>
            <person name="Nakano K."/>
            <person name="Ninomiya N."/>
            <person name="Nishio T."/>
            <person name="Okada M."/>
            <person name="Plessy C."/>
            <person name="Shibata K."/>
            <person name="Shiraki T."/>
            <person name="Suzuki S."/>
            <person name="Tagami M."/>
            <person name="Waki K."/>
            <person name="Watahiki A."/>
            <person name="Okamura-Oho Y."/>
            <person name="Suzuki H."/>
            <person name="Kawai J."/>
            <person name="Hayashizaki Y."/>
        </authorList>
    </citation>
    <scope>NUCLEOTIDE SEQUENCE [LARGE SCALE MRNA]</scope>
    <source>
        <strain>NOD</strain>
        <tissue>Spleen</tissue>
    </source>
</reference>
<reference key="4">
    <citation type="journal article" date="2004" name="Genome Res.">
        <title>The status, quality, and expansion of the NIH full-length cDNA project: the Mammalian Gene Collection (MGC).</title>
        <authorList>
            <consortium name="The MGC Project Team"/>
        </authorList>
    </citation>
    <scope>NUCLEOTIDE SEQUENCE [LARGE SCALE MRNA]</scope>
    <source>
        <strain>C57BL/6J</strain>
        <strain>FVB/N</strain>
        <tissue>Brain</tissue>
        <tissue>Colon</tissue>
    </source>
</reference>
<reference key="5">
    <citation type="journal article" date="1992" name="Oncogene">
        <title>An Eph-related receptor protein tyrosine kinase gene segmentally expressed in the developing mouse hindbrain.</title>
        <authorList>
            <person name="Gilardi-Hebenstreit P."/>
            <person name="Nieto M.A."/>
            <person name="Frain M."/>
            <person name="Mattei M.-G."/>
            <person name="Chestier A."/>
            <person name="Wilkinson D.G."/>
            <person name="Charnay P."/>
        </authorList>
    </citation>
    <scope>NUCLEOTIDE SEQUENCE [MRNA] OF 316-367</scope>
    <source>
        <strain>C57BL/6J</strain>
        <tissue>Embryonic brain</tissue>
    </source>
</reference>
<reference key="6">
    <citation type="submission" date="2009-01" db="UniProtKB">
        <authorList>
            <person name="Lubec G."/>
            <person name="Sunyer B."/>
            <person name="Chen W.-Q."/>
        </authorList>
    </citation>
    <scope>PROTEIN SEQUENCE OF 338-347</scope>
    <scope>IDENTIFICATION BY MASS SPECTROMETRY</scope>
    <source>
        <strain>OF1</strain>
        <tissue>Hippocampus</tissue>
    </source>
</reference>
<reference key="7">
    <citation type="journal article" date="1993" name="Cell">
        <title>Disruption of the csk gene, encoding a negative regulator of Src family tyrosine kinases, leads to neural tube defects and embryonic lethality in mice.</title>
        <authorList>
            <person name="Imamoto A."/>
            <person name="Soriano P."/>
        </authorList>
    </citation>
    <scope>DISRUPTION PHENOTYPE</scope>
</reference>
<reference key="8">
    <citation type="journal article" date="1996" name="EMBO J.">
        <title>Association of inhibitory tyrosine protein kinase p50csk with protein tyrosine phosphatase PEP in T cells and other hemopoietic cells.</title>
        <authorList>
            <person name="Cloutier J.-F."/>
            <person name="Veillette A."/>
        </authorList>
    </citation>
    <scope>INTERACTION WITH PTPN22</scope>
</reference>
<reference key="9">
    <citation type="journal article" date="1999" name="J. Cell Sci.">
        <title>Characterization of a focal adhesion protein, Hic-5, that shares extensive homology with paxillin.</title>
        <authorList>
            <person name="Thomas S.M."/>
            <person name="Hagel M."/>
            <person name="Turner C.E."/>
        </authorList>
    </citation>
    <scope>INTERACTION WITH TGFB1I1</scope>
</reference>
<reference key="10">
    <citation type="journal article" date="2002" name="J. Immunol.">
        <title>Fyn is essential for tyrosine phosphorylation of Csk-binding protein/phosphoprotein associated with glycolipid-enriched microdomains in lipid rafts in resting T cells.</title>
        <authorList>
            <person name="Yasuda K."/>
            <person name="Nagafuku M."/>
            <person name="Shima T."/>
            <person name="Okada M."/>
            <person name="Yagi T."/>
            <person name="Yamada T."/>
            <person name="Minaki Y."/>
            <person name="Kato A."/>
            <person name="Tani-Ichi S."/>
            <person name="Hamaoka T."/>
            <person name="Kosugi A."/>
        </authorList>
    </citation>
    <scope>INTERACTION WITH PAG1</scope>
</reference>
<reference key="11">
    <citation type="journal article" date="2003" name="Mol. Cell. Biol.">
        <title>Phosphorylation-dependent regulation of T-cell activation by PAG/Cbp, a lipid raft-associated transmembrane adaptor.</title>
        <authorList>
            <person name="Davidson D."/>
            <person name="Bakinowski M."/>
            <person name="Thomas M.L."/>
            <person name="Horejsi V."/>
            <person name="Veillette A."/>
        </authorList>
    </citation>
    <scope>INTERACTION WITH PAG1</scope>
</reference>
<reference key="12">
    <citation type="journal article" date="2005" name="Mol. Cell. Biol.">
        <title>Cbp deficiency alters Csk localization in lipid rafts but does not affect T-cell development.</title>
        <authorList>
            <person name="Xu S."/>
            <person name="Huo J."/>
            <person name="Tan J.E.-L."/>
            <person name="Lam K.-P."/>
        </authorList>
    </citation>
    <scope>INTERACTION WITH PAG1</scope>
    <scope>SUBCELLULAR LOCATION</scope>
</reference>
<reference key="13">
    <citation type="journal article" date="2010" name="Cell">
        <title>A tissue-specific atlas of mouse protein phosphorylation and expression.</title>
        <authorList>
            <person name="Huttlin E.L."/>
            <person name="Jedrychowski M.P."/>
            <person name="Elias J.E."/>
            <person name="Goswami T."/>
            <person name="Rad R."/>
            <person name="Beausoleil S.A."/>
            <person name="Villen J."/>
            <person name="Haas W."/>
            <person name="Sowa M.E."/>
            <person name="Gygi S.P."/>
        </authorList>
    </citation>
    <scope>IDENTIFICATION BY MASS SPECTROMETRY [LARGE SCALE ANALYSIS]</scope>
    <source>
        <tissue>Kidney</tissue>
        <tissue>Lung</tissue>
        <tissue>Spleen</tissue>
        <tissue>Testis</tissue>
    </source>
</reference>
<reference key="14">
    <citation type="journal article" date="2013" name="J. Bone Miner. Res.">
        <title>Targeted disruption of leucine-rich repeat kinase 1 but not leucine-rich repeat kinase 2 in mice causes severe osteopetrosis.</title>
        <authorList>
            <person name="Xing W."/>
            <person name="Liu J."/>
            <person name="Cheng S."/>
            <person name="Vogel P."/>
            <person name="Mohan S."/>
            <person name="Brommage R."/>
        </authorList>
    </citation>
    <scope>INTERACTION WITH LRRK1</scope>
</reference>
<reference key="15">
    <citation type="journal article" date="2017" name="Immunol. Cell Biol.">
        <title>Development of SH2 probes and pull-down assays to detect pathogen-induced, site-specific tyrosine phosphorylation of the TLR adaptor SCIMP.</title>
        <authorList>
            <person name="Luo L."/>
            <person name="Tong S.J."/>
            <person name="Wall A.A."/>
            <person name="Khromykh T."/>
            <person name="Sweet M.J."/>
            <person name="Stow J.L."/>
        </authorList>
    </citation>
    <scope>INTERACTION WITH SCIMP</scope>
</reference>
<reference key="16">
    <citation type="journal article" date="2001" name="Nat. Struct. Biol.">
        <title>A novel, specific interaction involving the Csk SH3 domain and its natural ligand.</title>
        <authorList>
            <person name="Ghose R."/>
            <person name="Shekhtman A."/>
            <person name="Goger M.J."/>
            <person name="Ji H."/>
            <person name="Cowburn D."/>
        </authorList>
    </citation>
    <scope>STRUCTURE BY NMR OF 1-83</scope>
</reference>
<keyword id="KW-0002">3D-structure</keyword>
<keyword id="KW-0007">Acetylation</keyword>
<keyword id="KW-1064">Adaptive immunity</keyword>
<keyword id="KW-0067">ATP-binding</keyword>
<keyword id="KW-1003">Cell membrane</keyword>
<keyword id="KW-0963">Cytoplasm</keyword>
<keyword id="KW-0903">Direct protein sequencing</keyword>
<keyword id="KW-0391">Immunity</keyword>
<keyword id="KW-0418">Kinase</keyword>
<keyword id="KW-0460">Magnesium</keyword>
<keyword id="KW-0464">Manganese</keyword>
<keyword id="KW-0472">Membrane</keyword>
<keyword id="KW-0479">Metal-binding</keyword>
<keyword id="KW-0547">Nucleotide-binding</keyword>
<keyword id="KW-0597">Phosphoprotein</keyword>
<keyword id="KW-1185">Reference proteome</keyword>
<keyword id="KW-0727">SH2 domain</keyword>
<keyword id="KW-0728">SH3 domain</keyword>
<keyword id="KW-0808">Transferase</keyword>
<keyword id="KW-0829">Tyrosine-protein kinase</keyword>
<protein>
    <recommendedName>
        <fullName>Tyrosine-protein kinase CSK</fullName>
        <ecNumber evidence="3">2.7.10.2</ecNumber>
    </recommendedName>
    <alternativeName>
        <fullName>C-Src kinase</fullName>
    </alternativeName>
    <alternativeName>
        <fullName>Protein-tyrosine kinase MPK-2</fullName>
    </alternativeName>
    <alternativeName>
        <fullName>p50CSK</fullName>
    </alternativeName>
</protein>
<gene>
    <name type="primary">Csk</name>
</gene>